<organism>
    <name type="scientific">Caenorhabditis elegans</name>
    <dbReference type="NCBI Taxonomy" id="6239"/>
    <lineage>
        <taxon>Eukaryota</taxon>
        <taxon>Metazoa</taxon>
        <taxon>Ecdysozoa</taxon>
        <taxon>Nematoda</taxon>
        <taxon>Chromadorea</taxon>
        <taxon>Rhabditida</taxon>
        <taxon>Rhabditina</taxon>
        <taxon>Rhabditomorpha</taxon>
        <taxon>Rhabditoidea</taxon>
        <taxon>Rhabditidae</taxon>
        <taxon>Peloderinae</taxon>
        <taxon>Caenorhabditis</taxon>
    </lineage>
</organism>
<evidence type="ECO:0000250" key="1"/>
<evidence type="ECO:0000255" key="2">
    <source>
        <dbReference type="PROSITE-ProRule" id="PRU01059"/>
    </source>
</evidence>
<evidence type="ECO:0000256" key="3">
    <source>
        <dbReference type="SAM" id="MobiDB-lite"/>
    </source>
</evidence>
<evidence type="ECO:0000312" key="4">
    <source>
        <dbReference type="WormBase" id="F31E3.5"/>
    </source>
</evidence>
<evidence type="ECO:0000312" key="5">
    <source>
        <dbReference type="WormBase" id="R03G5.1a"/>
    </source>
</evidence>
<comment type="function">
    <text>This protein promotes the GTP-dependent binding of aminoacyl-tRNA to the A-site of ribosomes during protein biosynthesis.</text>
</comment>
<comment type="subcellular location">
    <subcellularLocation>
        <location>Cytoplasm</location>
    </subcellularLocation>
</comment>
<comment type="similarity">
    <text evidence="2">Belongs to the TRAFAC class translation factor GTPase superfamily. Classic translation factor GTPase family. EF-Tu/EF-1A subfamily.</text>
</comment>
<sequence>MGKEKVHINIVVIGHVDSGKSTTTGHLIYKCGGIDKRTIEKFEKEAQEMGKGSFKYAWVLDKLKAERERGITIDIALWKFETAKYYITIIDAPGHRDFIKNMITGTSQADCAVLVVACGTGEFEAGISKNGQTREHALLAQTLGVKQLIVACNKMDSTEPPFSEARFTEITNEVSGFIKKIGYNPKAVPFVPISGFNGDNMLEVSSNMPWFKGWAVERKEGNASGKTLLEALDSIIPPQRPTDRPLRLPLQDVYKIGGIGTVPVGRVETGIIKPGMVVTFAPQNVTTEVKSVEMHHESLPEAVPGDNVGFNVKNVSVKDIRRGSVCSDSKQDPAKEARTFHAQVIIMNHPGQISNGYTPVLDCHTAHIACKFNELKEKVDRRTGKKVEDFPKFLKSGDAGIVELIPTKPLCVESFTDYAPLGRFAVRDMRQTVAVGVIKSVEKSDGSSGKVTKSAQKAAPKKK</sequence>
<keyword id="KW-0963">Cytoplasm</keyword>
<keyword id="KW-0251">Elongation factor</keyword>
<keyword id="KW-0342">GTP-binding</keyword>
<keyword id="KW-0547">Nucleotide-binding</keyword>
<keyword id="KW-0597">Phosphoprotein</keyword>
<keyword id="KW-0648">Protein biosynthesis</keyword>
<keyword id="KW-1185">Reference proteome</keyword>
<dbReference type="EMBL" id="FO080948">
    <property type="protein sequence ID" value="CCD68024.1"/>
    <property type="molecule type" value="Genomic_DNA"/>
</dbReference>
<dbReference type="EMBL" id="FO080392">
    <property type="protein sequence ID" value="CCD63407.1"/>
    <property type="molecule type" value="Genomic_DNA"/>
</dbReference>
<dbReference type="PIR" id="T16218">
    <property type="entry name" value="T16218"/>
</dbReference>
<dbReference type="SMR" id="P53013"/>
<dbReference type="BioGRID" id="41189">
    <property type="interactions" value="27"/>
</dbReference>
<dbReference type="BioGRID" id="45968">
    <property type="interactions" value="6"/>
</dbReference>
<dbReference type="DIP" id="DIP-26595N"/>
<dbReference type="FunCoup" id="P53013">
    <property type="interactions" value="1402"/>
</dbReference>
<dbReference type="IntAct" id="P53013">
    <property type="interactions" value="5"/>
</dbReference>
<dbReference type="STRING" id="6239.F31E3.5.3"/>
<dbReference type="iPTMnet" id="P53013"/>
<dbReference type="PaxDb" id="6239-F31E3.5.1"/>
<dbReference type="PeptideAtlas" id="P53013"/>
<dbReference type="EnsemblMetazoa" id="F31E3.5.1">
    <property type="protein sequence ID" value="F31E3.5.1"/>
    <property type="gene ID" value="WBGene00001168"/>
</dbReference>
<dbReference type="EnsemblMetazoa" id="R03G5.1.1">
    <property type="protein sequence ID" value="R03G5.1.1"/>
    <property type="gene ID" value="WBGene00001169"/>
</dbReference>
<dbReference type="EnsemblMetazoa" id="R03G5.1.2">
    <property type="protein sequence ID" value="R03G5.1.2"/>
    <property type="gene ID" value="WBGene00001169"/>
</dbReference>
<dbReference type="EnsemblMetazoa" id="R03G5.1.3">
    <property type="protein sequence ID" value="R03G5.1.3"/>
    <property type="gene ID" value="WBGene00001169"/>
</dbReference>
<dbReference type="KEGG" id="cel:CELE_F31E3.5"/>
<dbReference type="KEGG" id="cel:CELE_R03G5.1"/>
<dbReference type="UCSC" id="F31E3.5.2">
    <property type="organism name" value="c. elegans"/>
</dbReference>
<dbReference type="AGR" id="WB:WBGene00001168"/>
<dbReference type="AGR" id="WB:WBGene00001169"/>
<dbReference type="CTD" id="175975"/>
<dbReference type="CTD" id="181044"/>
<dbReference type="WormBase" id="F31E3.5">
    <property type="protein sequence ID" value="CE01270"/>
    <property type="gene ID" value="WBGene00001168"/>
    <property type="gene designation" value="eef-1A.1"/>
</dbReference>
<dbReference type="WormBase" id="R03G5.1a">
    <property type="protein sequence ID" value="CE01270"/>
    <property type="gene ID" value="WBGene00001169"/>
    <property type="gene designation" value="eef-1A.2"/>
</dbReference>
<dbReference type="eggNOG" id="KOG0052">
    <property type="taxonomic scope" value="Eukaryota"/>
</dbReference>
<dbReference type="GeneTree" id="ENSGT00940000164334"/>
<dbReference type="HOGENOM" id="CLU_007265_3_5_1"/>
<dbReference type="InParanoid" id="P53013"/>
<dbReference type="OMA" id="KLCLHFE"/>
<dbReference type="OrthoDB" id="342024at2759"/>
<dbReference type="PhylomeDB" id="P53013"/>
<dbReference type="Reactome" id="R-CEL-3371511">
    <property type="pathway name" value="HSF1 activation"/>
</dbReference>
<dbReference type="Reactome" id="R-CEL-6798695">
    <property type="pathway name" value="Neutrophil degranulation"/>
</dbReference>
<dbReference type="Reactome" id="R-CEL-8876725">
    <property type="pathway name" value="Protein methylation"/>
</dbReference>
<dbReference type="SignaLink" id="P53013"/>
<dbReference type="PRO" id="PR:P53013"/>
<dbReference type="Proteomes" id="UP000001940">
    <property type="component" value="Chromosome III"/>
</dbReference>
<dbReference type="Proteomes" id="UP000001940">
    <property type="component" value="Chromosome X"/>
</dbReference>
<dbReference type="Bgee" id="WBGene00001168">
    <property type="expression patterns" value="Expressed in adult organism and 5 other cell types or tissues"/>
</dbReference>
<dbReference type="GO" id="GO:0005737">
    <property type="term" value="C:cytoplasm"/>
    <property type="evidence" value="ECO:0007669"/>
    <property type="project" value="UniProtKB-SubCell"/>
</dbReference>
<dbReference type="GO" id="GO:0005525">
    <property type="term" value="F:GTP binding"/>
    <property type="evidence" value="ECO:0007669"/>
    <property type="project" value="UniProtKB-KW"/>
</dbReference>
<dbReference type="GO" id="GO:0003924">
    <property type="term" value="F:GTPase activity"/>
    <property type="evidence" value="ECO:0000314"/>
    <property type="project" value="WormBase"/>
</dbReference>
<dbReference type="GO" id="GO:0003746">
    <property type="term" value="F:translation elongation factor activity"/>
    <property type="evidence" value="ECO:0000318"/>
    <property type="project" value="GO_Central"/>
</dbReference>
<dbReference type="GO" id="GO:0008135">
    <property type="term" value="F:translation factor activity, RNA binding"/>
    <property type="evidence" value="ECO:0000250"/>
    <property type="project" value="WormBase"/>
</dbReference>
<dbReference type="GO" id="GO:0006412">
    <property type="term" value="P:translation"/>
    <property type="evidence" value="ECO:0000318"/>
    <property type="project" value="GO_Central"/>
</dbReference>
<dbReference type="GO" id="GO:0006414">
    <property type="term" value="P:translational elongation"/>
    <property type="evidence" value="ECO:0000318"/>
    <property type="project" value="GO_Central"/>
</dbReference>
<dbReference type="CDD" id="cd01883">
    <property type="entry name" value="EF1_alpha"/>
    <property type="match status" value="1"/>
</dbReference>
<dbReference type="CDD" id="cd03693">
    <property type="entry name" value="EF1_alpha_II"/>
    <property type="match status" value="1"/>
</dbReference>
<dbReference type="CDD" id="cd03705">
    <property type="entry name" value="EF1_alpha_III"/>
    <property type="match status" value="1"/>
</dbReference>
<dbReference type="FunFam" id="2.40.30.10:FF:000003">
    <property type="entry name" value="Elongation factor 1-alpha"/>
    <property type="match status" value="1"/>
</dbReference>
<dbReference type="FunFam" id="2.40.30.10:FF:000005">
    <property type="entry name" value="Elongation factor 1-alpha"/>
    <property type="match status" value="1"/>
</dbReference>
<dbReference type="FunFam" id="3.40.50.300:FF:000090">
    <property type="entry name" value="Elongation factor 1-alpha"/>
    <property type="match status" value="1"/>
</dbReference>
<dbReference type="Gene3D" id="3.40.50.300">
    <property type="entry name" value="P-loop containing nucleotide triphosphate hydrolases"/>
    <property type="match status" value="1"/>
</dbReference>
<dbReference type="Gene3D" id="2.40.30.10">
    <property type="entry name" value="Translation factors"/>
    <property type="match status" value="2"/>
</dbReference>
<dbReference type="InterPro" id="IPR004161">
    <property type="entry name" value="EFTu-like_2"/>
</dbReference>
<dbReference type="InterPro" id="IPR031157">
    <property type="entry name" value="G_TR_CS"/>
</dbReference>
<dbReference type="InterPro" id="IPR054696">
    <property type="entry name" value="GTP-eEF1A_C"/>
</dbReference>
<dbReference type="InterPro" id="IPR027417">
    <property type="entry name" value="P-loop_NTPase"/>
</dbReference>
<dbReference type="InterPro" id="IPR000795">
    <property type="entry name" value="T_Tr_GTP-bd_dom"/>
</dbReference>
<dbReference type="InterPro" id="IPR050100">
    <property type="entry name" value="TRAFAC_GTPase_members"/>
</dbReference>
<dbReference type="InterPro" id="IPR009000">
    <property type="entry name" value="Transl_B-barrel_sf"/>
</dbReference>
<dbReference type="InterPro" id="IPR009001">
    <property type="entry name" value="Transl_elong_EF1A/Init_IF2_C"/>
</dbReference>
<dbReference type="InterPro" id="IPR004539">
    <property type="entry name" value="Transl_elong_EF1A_euk/arc"/>
</dbReference>
<dbReference type="NCBIfam" id="TIGR00483">
    <property type="entry name" value="EF-1_alpha"/>
    <property type="match status" value="1"/>
</dbReference>
<dbReference type="NCBIfam" id="NF008969">
    <property type="entry name" value="PRK12317.1"/>
    <property type="match status" value="1"/>
</dbReference>
<dbReference type="PANTHER" id="PTHR23115">
    <property type="entry name" value="TRANSLATION FACTOR"/>
    <property type="match status" value="1"/>
</dbReference>
<dbReference type="Pfam" id="PF22594">
    <property type="entry name" value="GTP-eEF1A_C"/>
    <property type="match status" value="1"/>
</dbReference>
<dbReference type="Pfam" id="PF00009">
    <property type="entry name" value="GTP_EFTU"/>
    <property type="match status" value="1"/>
</dbReference>
<dbReference type="Pfam" id="PF03144">
    <property type="entry name" value="GTP_EFTU_D2"/>
    <property type="match status" value="1"/>
</dbReference>
<dbReference type="PRINTS" id="PR00315">
    <property type="entry name" value="ELONGATNFCT"/>
</dbReference>
<dbReference type="SUPFAM" id="SSF50465">
    <property type="entry name" value="EF-Tu/eEF-1alpha/eIF2-gamma C-terminal domain"/>
    <property type="match status" value="1"/>
</dbReference>
<dbReference type="SUPFAM" id="SSF52540">
    <property type="entry name" value="P-loop containing nucleoside triphosphate hydrolases"/>
    <property type="match status" value="1"/>
</dbReference>
<dbReference type="SUPFAM" id="SSF50447">
    <property type="entry name" value="Translation proteins"/>
    <property type="match status" value="1"/>
</dbReference>
<dbReference type="PROSITE" id="PS00301">
    <property type="entry name" value="G_TR_1"/>
    <property type="match status" value="1"/>
</dbReference>
<dbReference type="PROSITE" id="PS51722">
    <property type="entry name" value="G_TR_2"/>
    <property type="match status" value="1"/>
</dbReference>
<protein>
    <recommendedName>
        <fullName>Elongation factor 1-alpha</fullName>
        <shortName>EF-1-alpha</shortName>
    </recommendedName>
</protein>
<accession>P53013</accession>
<reference key="1">
    <citation type="journal article" date="1998" name="Science">
        <title>Genome sequence of the nematode C. elegans: a platform for investigating biology.</title>
        <authorList>
            <consortium name="The C. elegans sequencing consortium"/>
        </authorList>
    </citation>
    <scope>NUCLEOTIDE SEQUENCE [LARGE SCALE GENOMIC DNA] (EFT-3 AND EFT-4)</scope>
    <source>
        <strain>Bristol N2</strain>
    </source>
</reference>
<gene>
    <name evidence="4" type="primary">eef-1A.1</name>
    <name evidence="4" type="ORF">F31E3.5</name>
</gene>
<gene>
    <name evidence="5" type="primary">eef-1A.2</name>
    <name evidence="5" type="ORF">R03G5.1</name>
</gene>
<name>EF1A_CAEEL</name>
<proteinExistence type="inferred from homology"/>
<feature type="chain" id="PRO_0000090918" description="Elongation factor 1-alpha">
    <location>
        <begin position="1"/>
        <end position="463"/>
    </location>
</feature>
<feature type="domain" description="tr-type G" evidence="2">
    <location>
        <begin position="5"/>
        <end position="242"/>
    </location>
</feature>
<feature type="region of interest" description="G1" evidence="2">
    <location>
        <begin position="14"/>
        <end position="21"/>
    </location>
</feature>
<feature type="region of interest" description="G2" evidence="2">
    <location>
        <begin position="70"/>
        <end position="74"/>
    </location>
</feature>
<feature type="region of interest" description="G3" evidence="2">
    <location>
        <begin position="91"/>
        <end position="94"/>
    </location>
</feature>
<feature type="region of interest" description="G4" evidence="2">
    <location>
        <begin position="153"/>
        <end position="156"/>
    </location>
</feature>
<feature type="region of interest" description="G5" evidence="2">
    <location>
        <begin position="194"/>
        <end position="196"/>
    </location>
</feature>
<feature type="region of interest" description="Disordered" evidence="3">
    <location>
        <begin position="443"/>
        <end position="463"/>
    </location>
</feature>
<feature type="compositionally biased region" description="Polar residues" evidence="3">
    <location>
        <begin position="446"/>
        <end position="455"/>
    </location>
</feature>
<feature type="binding site" evidence="1">
    <location>
        <begin position="14"/>
        <end position="21"/>
    </location>
    <ligand>
        <name>GTP</name>
        <dbReference type="ChEBI" id="CHEBI:37565"/>
    </ligand>
</feature>
<feature type="binding site" evidence="1">
    <location>
        <begin position="91"/>
        <end position="95"/>
    </location>
    <ligand>
        <name>GTP</name>
        <dbReference type="ChEBI" id="CHEBI:37565"/>
    </ligand>
</feature>
<feature type="binding site" evidence="1">
    <location>
        <begin position="153"/>
        <end position="156"/>
    </location>
    <ligand>
        <name>GTP</name>
        <dbReference type="ChEBI" id="CHEBI:37565"/>
    </ligand>
</feature>
<feature type="modified residue" description="5-glutamyl glycerylphosphorylethanolamine" evidence="1">
    <location>
        <position position="301"/>
    </location>
</feature>
<feature type="modified residue" description="5-glutamyl glycerylphosphorylethanolamine" evidence="1">
    <location>
        <position position="374"/>
    </location>
</feature>